<comment type="function">
    <text evidence="1">Carrier of the growing fatty acid chain in fatty acid biosynthesis.</text>
</comment>
<comment type="pathway">
    <text evidence="1">Lipid metabolism; fatty acid biosynthesis.</text>
</comment>
<comment type="interaction">
    <interactant intactId="EBI-10069623">
        <id>Q72CS8</id>
    </interactant>
    <interactant intactId="EBI-10069619">
        <id>Q72CS9</id>
        <label>fabF</label>
    </interactant>
    <organismsDiffer>false</organismsDiffer>
    <experiments>2</experiments>
</comment>
<comment type="subcellular location">
    <subcellularLocation>
        <location evidence="1">Cytoplasm</location>
    </subcellularLocation>
</comment>
<comment type="PTM">
    <text evidence="1">4'-phosphopantetheine is transferred from CoA to a specific serine of apo-ACP by AcpS. This modification is essential for activity because fatty acids are bound in thioester linkage to the sulfhydryl of the prosthetic group.</text>
</comment>
<comment type="similarity">
    <text evidence="1">Belongs to the acyl carrier protein (ACP) family.</text>
</comment>
<sequence>MSVEEKVKKIIMDQLGVSAEEVKPEASFVEDLGADSLDLTELIMAMEEEFGVEIDDDDAQKILKVKDAIDYVSNKQ</sequence>
<protein>
    <recommendedName>
        <fullName evidence="1">Acyl carrier protein</fullName>
        <shortName evidence="1">ACP</shortName>
    </recommendedName>
</protein>
<name>ACP_NITV2</name>
<accession>Q72CS8</accession>
<reference key="1">
    <citation type="journal article" date="2004" name="Nat. Biotechnol.">
        <title>The genome sequence of the anaerobic, sulfate-reducing bacterium Desulfovibrio vulgaris Hildenborough.</title>
        <authorList>
            <person name="Heidelberg J.F."/>
            <person name="Seshadri R."/>
            <person name="Haveman S.A."/>
            <person name="Hemme C.L."/>
            <person name="Paulsen I.T."/>
            <person name="Kolonay J.F."/>
            <person name="Eisen J.A."/>
            <person name="Ward N.L."/>
            <person name="Methe B.A."/>
            <person name="Brinkac L.M."/>
            <person name="Daugherty S.C."/>
            <person name="DeBoy R.T."/>
            <person name="Dodson R.J."/>
            <person name="Durkin A.S."/>
            <person name="Madupu R."/>
            <person name="Nelson W.C."/>
            <person name="Sullivan S.A."/>
            <person name="Fouts D.E."/>
            <person name="Haft D.H."/>
            <person name="Selengut J."/>
            <person name="Peterson J.D."/>
            <person name="Davidsen T.M."/>
            <person name="Zafar N."/>
            <person name="Zhou L."/>
            <person name="Radune D."/>
            <person name="Dimitrov G."/>
            <person name="Hance M."/>
            <person name="Tran K."/>
            <person name="Khouri H.M."/>
            <person name="Gill J."/>
            <person name="Utterback T.R."/>
            <person name="Feldblyum T.V."/>
            <person name="Wall J.D."/>
            <person name="Voordouw G."/>
            <person name="Fraser C.M."/>
        </authorList>
    </citation>
    <scope>NUCLEOTIDE SEQUENCE [LARGE SCALE GENOMIC DNA]</scope>
    <source>
        <strain>ATCC 29579 / DSM 644 / CCUG 34227 / NCIMB 8303 / VKM B-1760 / Hildenborough</strain>
    </source>
</reference>
<keyword id="KW-0963">Cytoplasm</keyword>
<keyword id="KW-0275">Fatty acid biosynthesis</keyword>
<keyword id="KW-0276">Fatty acid metabolism</keyword>
<keyword id="KW-0444">Lipid biosynthesis</keyword>
<keyword id="KW-0443">Lipid metabolism</keyword>
<keyword id="KW-0596">Phosphopantetheine</keyword>
<keyword id="KW-0597">Phosphoprotein</keyword>
<keyword id="KW-1185">Reference proteome</keyword>
<dbReference type="EMBL" id="AE017285">
    <property type="protein sequence ID" value="AAS95683.1"/>
    <property type="molecule type" value="Genomic_DNA"/>
</dbReference>
<dbReference type="RefSeq" id="WP_010938501.1">
    <property type="nucleotide sequence ID" value="NC_002937.3"/>
</dbReference>
<dbReference type="RefSeq" id="YP_010424.1">
    <property type="nucleotide sequence ID" value="NC_002937.3"/>
</dbReference>
<dbReference type="SMR" id="Q72CS8"/>
<dbReference type="IntAct" id="Q72CS8">
    <property type="interactions" value="3"/>
</dbReference>
<dbReference type="STRING" id="882.DVU_1205"/>
<dbReference type="PaxDb" id="882-DVU_1205"/>
<dbReference type="EnsemblBacteria" id="AAS95683">
    <property type="protein sequence ID" value="AAS95683"/>
    <property type="gene ID" value="DVU_1205"/>
</dbReference>
<dbReference type="KEGG" id="dvu:DVU_1205"/>
<dbReference type="PATRIC" id="fig|882.5.peg.1129"/>
<dbReference type="eggNOG" id="COG0236">
    <property type="taxonomic scope" value="Bacteria"/>
</dbReference>
<dbReference type="HOGENOM" id="CLU_108696_5_1_7"/>
<dbReference type="OrthoDB" id="9804551at2"/>
<dbReference type="PhylomeDB" id="Q72CS8"/>
<dbReference type="UniPathway" id="UPA00094"/>
<dbReference type="Proteomes" id="UP000002194">
    <property type="component" value="Chromosome"/>
</dbReference>
<dbReference type="GO" id="GO:0005829">
    <property type="term" value="C:cytosol"/>
    <property type="evidence" value="ECO:0007669"/>
    <property type="project" value="TreeGrafter"/>
</dbReference>
<dbReference type="GO" id="GO:0016020">
    <property type="term" value="C:membrane"/>
    <property type="evidence" value="ECO:0007669"/>
    <property type="project" value="GOC"/>
</dbReference>
<dbReference type="GO" id="GO:0000035">
    <property type="term" value="F:acyl binding"/>
    <property type="evidence" value="ECO:0007669"/>
    <property type="project" value="TreeGrafter"/>
</dbReference>
<dbReference type="GO" id="GO:0000036">
    <property type="term" value="F:acyl carrier activity"/>
    <property type="evidence" value="ECO:0007669"/>
    <property type="project" value="UniProtKB-UniRule"/>
</dbReference>
<dbReference type="GO" id="GO:0009245">
    <property type="term" value="P:lipid A biosynthetic process"/>
    <property type="evidence" value="ECO:0007669"/>
    <property type="project" value="TreeGrafter"/>
</dbReference>
<dbReference type="FunFam" id="1.10.1200.10:FF:000001">
    <property type="entry name" value="Acyl carrier protein"/>
    <property type="match status" value="1"/>
</dbReference>
<dbReference type="Gene3D" id="1.10.1200.10">
    <property type="entry name" value="ACP-like"/>
    <property type="match status" value="1"/>
</dbReference>
<dbReference type="HAMAP" id="MF_01217">
    <property type="entry name" value="Acyl_carrier"/>
    <property type="match status" value="1"/>
</dbReference>
<dbReference type="InterPro" id="IPR003231">
    <property type="entry name" value="ACP"/>
</dbReference>
<dbReference type="InterPro" id="IPR036736">
    <property type="entry name" value="ACP-like_sf"/>
</dbReference>
<dbReference type="InterPro" id="IPR009081">
    <property type="entry name" value="PP-bd_ACP"/>
</dbReference>
<dbReference type="InterPro" id="IPR006162">
    <property type="entry name" value="Ppantetheine_attach_site"/>
</dbReference>
<dbReference type="NCBIfam" id="TIGR00517">
    <property type="entry name" value="acyl_carrier"/>
    <property type="match status" value="1"/>
</dbReference>
<dbReference type="NCBIfam" id="NF002148">
    <property type="entry name" value="PRK00982.1-2"/>
    <property type="match status" value="1"/>
</dbReference>
<dbReference type="NCBIfam" id="NF002149">
    <property type="entry name" value="PRK00982.1-3"/>
    <property type="match status" value="1"/>
</dbReference>
<dbReference type="NCBIfam" id="NF002150">
    <property type="entry name" value="PRK00982.1-4"/>
    <property type="match status" value="1"/>
</dbReference>
<dbReference type="NCBIfam" id="NF002151">
    <property type="entry name" value="PRK00982.1-5"/>
    <property type="match status" value="1"/>
</dbReference>
<dbReference type="PANTHER" id="PTHR20863">
    <property type="entry name" value="ACYL CARRIER PROTEIN"/>
    <property type="match status" value="1"/>
</dbReference>
<dbReference type="PANTHER" id="PTHR20863:SF76">
    <property type="entry name" value="CARRIER DOMAIN-CONTAINING PROTEIN"/>
    <property type="match status" value="1"/>
</dbReference>
<dbReference type="Pfam" id="PF00550">
    <property type="entry name" value="PP-binding"/>
    <property type="match status" value="1"/>
</dbReference>
<dbReference type="SUPFAM" id="SSF47336">
    <property type="entry name" value="ACP-like"/>
    <property type="match status" value="1"/>
</dbReference>
<dbReference type="PROSITE" id="PS50075">
    <property type="entry name" value="CARRIER"/>
    <property type="match status" value="1"/>
</dbReference>
<dbReference type="PROSITE" id="PS00012">
    <property type="entry name" value="PHOSPHOPANTETHEINE"/>
    <property type="match status" value="1"/>
</dbReference>
<proteinExistence type="evidence at protein level"/>
<feature type="chain" id="PRO_1000066602" description="Acyl carrier protein">
    <location>
        <begin position="1"/>
        <end position="76"/>
    </location>
</feature>
<feature type="domain" description="Carrier" evidence="2">
    <location>
        <begin position="1"/>
        <end position="76"/>
    </location>
</feature>
<feature type="modified residue" description="O-(pantetheine 4'-phosphoryl)serine" evidence="2">
    <location>
        <position position="36"/>
    </location>
</feature>
<evidence type="ECO:0000255" key="1">
    <source>
        <dbReference type="HAMAP-Rule" id="MF_01217"/>
    </source>
</evidence>
<evidence type="ECO:0000255" key="2">
    <source>
        <dbReference type="PROSITE-ProRule" id="PRU00258"/>
    </source>
</evidence>
<gene>
    <name evidence="1" type="primary">acpP</name>
    <name type="ordered locus">DVU_1205</name>
</gene>
<organism>
    <name type="scientific">Nitratidesulfovibrio vulgaris (strain ATCC 29579 / DSM 644 / CCUG 34227 / NCIMB 8303 / VKM B-1760 / Hildenborough)</name>
    <name type="common">Desulfovibrio vulgaris</name>
    <dbReference type="NCBI Taxonomy" id="882"/>
    <lineage>
        <taxon>Bacteria</taxon>
        <taxon>Pseudomonadati</taxon>
        <taxon>Thermodesulfobacteriota</taxon>
        <taxon>Desulfovibrionia</taxon>
        <taxon>Desulfovibrionales</taxon>
        <taxon>Desulfovibrionaceae</taxon>
        <taxon>Nitratidesulfovibrio</taxon>
    </lineage>
</organism>